<feature type="propeptide" id="PRO_0000355772" evidence="1">
    <location>
        <begin position="1"/>
        <end position="2"/>
    </location>
</feature>
<feature type="chain" id="PRO_0000355773" description="Ribulose bisphosphate carboxylase large chain">
    <location>
        <begin position="3"/>
        <end position="477"/>
    </location>
</feature>
<feature type="active site" description="Proton acceptor" evidence="1">
    <location>
        <position position="175"/>
    </location>
</feature>
<feature type="active site" description="Proton acceptor" evidence="1">
    <location>
        <position position="294"/>
    </location>
</feature>
<feature type="binding site" description="in homodimeric partner" evidence="1">
    <location>
        <position position="123"/>
    </location>
    <ligand>
        <name>substrate</name>
    </ligand>
</feature>
<feature type="binding site" evidence="1">
    <location>
        <position position="173"/>
    </location>
    <ligand>
        <name>substrate</name>
    </ligand>
</feature>
<feature type="binding site" evidence="1">
    <location>
        <position position="177"/>
    </location>
    <ligand>
        <name>substrate</name>
    </ligand>
</feature>
<feature type="binding site" description="via carbamate group" evidence="1">
    <location>
        <position position="201"/>
    </location>
    <ligand>
        <name>Mg(2+)</name>
        <dbReference type="ChEBI" id="CHEBI:18420"/>
    </ligand>
</feature>
<feature type="binding site" evidence="1">
    <location>
        <position position="203"/>
    </location>
    <ligand>
        <name>Mg(2+)</name>
        <dbReference type="ChEBI" id="CHEBI:18420"/>
    </ligand>
</feature>
<feature type="binding site" evidence="1">
    <location>
        <position position="204"/>
    </location>
    <ligand>
        <name>Mg(2+)</name>
        <dbReference type="ChEBI" id="CHEBI:18420"/>
    </ligand>
</feature>
<feature type="binding site" evidence="1">
    <location>
        <position position="295"/>
    </location>
    <ligand>
        <name>substrate</name>
    </ligand>
</feature>
<feature type="binding site" evidence="1">
    <location>
        <position position="327"/>
    </location>
    <ligand>
        <name>substrate</name>
    </ligand>
</feature>
<feature type="binding site" evidence="1">
    <location>
        <position position="379"/>
    </location>
    <ligand>
        <name>substrate</name>
    </ligand>
</feature>
<feature type="site" description="Transition state stabilizer" evidence="1">
    <location>
        <position position="334"/>
    </location>
</feature>
<feature type="modified residue" description="N-acetylproline" evidence="1">
    <location>
        <position position="3"/>
    </location>
</feature>
<feature type="modified residue" description="N6,N6,N6-trimethyllysine" evidence="1">
    <location>
        <position position="14"/>
    </location>
</feature>
<feature type="modified residue" description="N6-carboxylysine" evidence="1">
    <location>
        <position position="201"/>
    </location>
</feature>
<feature type="disulfide bond" description="Interchain; in linked form" evidence="1">
    <location>
        <position position="247"/>
    </location>
</feature>
<reference key="1">
    <citation type="journal article" date="2007" name="Mol. Phylogenet. Evol.">
        <title>Phylogenetic and evolutionary implications of complete chloroplast genome sequences of four early-diverging angiosperms: Buxus (Buxaceae), Chloranthus (Chloranthaceae), Dioscorea (Dioscoreaceae), and Illicium (Schisandraceae).</title>
        <authorList>
            <person name="Hansen D.R."/>
            <person name="Dastidar S.G."/>
            <person name="Cai Z."/>
            <person name="Penaflor C."/>
            <person name="Kuehl J.V."/>
            <person name="Boore J.L."/>
            <person name="Jansen R.K."/>
        </authorList>
    </citation>
    <scope>NUCLEOTIDE SEQUENCE [LARGE SCALE GENOMIC DNA]</scope>
</reference>
<accession>A6MML5</accession>
<proteinExistence type="inferred from homology"/>
<evidence type="ECO:0000255" key="1">
    <source>
        <dbReference type="HAMAP-Rule" id="MF_01338"/>
    </source>
</evidence>
<organism>
    <name type="scientific">Dioscorea elephantipes</name>
    <name type="common">Elephant's foot yam</name>
    <name type="synonym">Testudinaria elephantipes</name>
    <dbReference type="NCBI Taxonomy" id="145284"/>
    <lineage>
        <taxon>Eukaryota</taxon>
        <taxon>Viridiplantae</taxon>
        <taxon>Streptophyta</taxon>
        <taxon>Embryophyta</taxon>
        <taxon>Tracheophyta</taxon>
        <taxon>Spermatophyta</taxon>
        <taxon>Magnoliopsida</taxon>
        <taxon>Liliopsida</taxon>
        <taxon>Dioscoreales</taxon>
        <taxon>Dioscoreaceae</taxon>
        <taxon>Dioscorea</taxon>
    </lineage>
</organism>
<sequence length="477" mass="52941">MSPQTETKASVGFKAGVKDYKLTYYTPDYETKDTDILAAFRVSPQPGVPPEEAGAAVAAESSTGTWTTVWTDGLTSLDRYKGRCYHIESVVGEENQYIAYVAYPLDLFEEGSVTNMFTSIVGNVFGFKALRALRLEDLRIPTSYSKTFQGPPHGIQVERDKLNKYGRPLLGCTIKPKLGLSAKNYGRAVYECLRGGLDFTKDDENVNSQPFMRWRDRFLFCAEAIYKAQAETGEIKGHYLNATAGTCEEMIKRAVFARELGAPIVMHDYLTGGFTANTSLAHYCRDNGLLLHIHRAMHAVIDRQKNHGMHFRVLAKALRMSGGDHIHAGTVVGKLEGEREMTLGFVDLLRDDFIEKDRSRGIFFTQDWVSMPGVLPVASGGIHVWHMPALTEIFGDDSVLQFGGGTLGHPWGNAPGAVANRVALEACVQARNEGRDLAREGNEIIREACKWSPELAAACEVWKEIKFEFKPVDTLDL</sequence>
<dbReference type="EC" id="4.1.1.39" evidence="1"/>
<dbReference type="EMBL" id="EF380353">
    <property type="protein sequence ID" value="ABR01438.1"/>
    <property type="molecule type" value="Genomic_DNA"/>
</dbReference>
<dbReference type="RefSeq" id="YP_001294360.1">
    <property type="nucleotide sequence ID" value="NC_009601.1"/>
</dbReference>
<dbReference type="SMR" id="A6MML5"/>
<dbReference type="GeneID" id="5236689"/>
<dbReference type="GO" id="GO:0009507">
    <property type="term" value="C:chloroplast"/>
    <property type="evidence" value="ECO:0007669"/>
    <property type="project" value="UniProtKB-SubCell"/>
</dbReference>
<dbReference type="GO" id="GO:0000287">
    <property type="term" value="F:magnesium ion binding"/>
    <property type="evidence" value="ECO:0007669"/>
    <property type="project" value="UniProtKB-UniRule"/>
</dbReference>
<dbReference type="GO" id="GO:0004497">
    <property type="term" value="F:monooxygenase activity"/>
    <property type="evidence" value="ECO:0007669"/>
    <property type="project" value="UniProtKB-KW"/>
</dbReference>
<dbReference type="GO" id="GO:0016984">
    <property type="term" value="F:ribulose-bisphosphate carboxylase activity"/>
    <property type="evidence" value="ECO:0007669"/>
    <property type="project" value="UniProtKB-UniRule"/>
</dbReference>
<dbReference type="GO" id="GO:0009853">
    <property type="term" value="P:photorespiration"/>
    <property type="evidence" value="ECO:0007669"/>
    <property type="project" value="UniProtKB-KW"/>
</dbReference>
<dbReference type="GO" id="GO:0019253">
    <property type="term" value="P:reductive pentose-phosphate cycle"/>
    <property type="evidence" value="ECO:0007669"/>
    <property type="project" value="UniProtKB-UniRule"/>
</dbReference>
<dbReference type="CDD" id="cd08212">
    <property type="entry name" value="RuBisCO_large_I"/>
    <property type="match status" value="1"/>
</dbReference>
<dbReference type="FunFam" id="3.20.20.110:FF:000001">
    <property type="entry name" value="Ribulose bisphosphate carboxylase large chain"/>
    <property type="match status" value="1"/>
</dbReference>
<dbReference type="FunFam" id="3.30.70.150:FF:000001">
    <property type="entry name" value="Ribulose bisphosphate carboxylase large chain"/>
    <property type="match status" value="1"/>
</dbReference>
<dbReference type="Gene3D" id="3.20.20.110">
    <property type="entry name" value="Ribulose bisphosphate carboxylase, large subunit, C-terminal domain"/>
    <property type="match status" value="1"/>
</dbReference>
<dbReference type="Gene3D" id="3.30.70.150">
    <property type="entry name" value="RuBisCO large subunit, N-terminal domain"/>
    <property type="match status" value="1"/>
</dbReference>
<dbReference type="HAMAP" id="MF_01338">
    <property type="entry name" value="RuBisCO_L_type1"/>
    <property type="match status" value="1"/>
</dbReference>
<dbReference type="InterPro" id="IPR033966">
    <property type="entry name" value="RuBisCO"/>
</dbReference>
<dbReference type="InterPro" id="IPR020878">
    <property type="entry name" value="RuBisCo_large_chain_AS"/>
</dbReference>
<dbReference type="InterPro" id="IPR000685">
    <property type="entry name" value="RuBisCO_lsu_C"/>
</dbReference>
<dbReference type="InterPro" id="IPR036376">
    <property type="entry name" value="RuBisCO_lsu_C_sf"/>
</dbReference>
<dbReference type="InterPro" id="IPR017443">
    <property type="entry name" value="RuBisCO_lsu_fd_N"/>
</dbReference>
<dbReference type="InterPro" id="IPR036422">
    <property type="entry name" value="RuBisCO_lsu_N_sf"/>
</dbReference>
<dbReference type="InterPro" id="IPR020888">
    <property type="entry name" value="RuBisCO_lsuI"/>
</dbReference>
<dbReference type="NCBIfam" id="NF003252">
    <property type="entry name" value="PRK04208.1"/>
    <property type="match status" value="1"/>
</dbReference>
<dbReference type="PANTHER" id="PTHR42704">
    <property type="entry name" value="RIBULOSE BISPHOSPHATE CARBOXYLASE"/>
    <property type="match status" value="1"/>
</dbReference>
<dbReference type="PANTHER" id="PTHR42704:SF16">
    <property type="entry name" value="RIBULOSE BISPHOSPHATE CARBOXYLASE LARGE CHAIN"/>
    <property type="match status" value="1"/>
</dbReference>
<dbReference type="Pfam" id="PF00016">
    <property type="entry name" value="RuBisCO_large"/>
    <property type="match status" value="1"/>
</dbReference>
<dbReference type="Pfam" id="PF02788">
    <property type="entry name" value="RuBisCO_large_N"/>
    <property type="match status" value="1"/>
</dbReference>
<dbReference type="SFLD" id="SFLDG01052">
    <property type="entry name" value="RuBisCO"/>
    <property type="match status" value="1"/>
</dbReference>
<dbReference type="SFLD" id="SFLDS00014">
    <property type="entry name" value="RuBisCO"/>
    <property type="match status" value="1"/>
</dbReference>
<dbReference type="SFLD" id="SFLDG00301">
    <property type="entry name" value="RuBisCO-like_proteins"/>
    <property type="match status" value="1"/>
</dbReference>
<dbReference type="SUPFAM" id="SSF51649">
    <property type="entry name" value="RuBisCo, C-terminal domain"/>
    <property type="match status" value="1"/>
</dbReference>
<dbReference type="SUPFAM" id="SSF54966">
    <property type="entry name" value="RuBisCO, large subunit, small (N-terminal) domain"/>
    <property type="match status" value="1"/>
</dbReference>
<dbReference type="PROSITE" id="PS00157">
    <property type="entry name" value="RUBISCO_LARGE"/>
    <property type="match status" value="1"/>
</dbReference>
<protein>
    <recommendedName>
        <fullName evidence="1">Ribulose bisphosphate carboxylase large chain</fullName>
        <shortName evidence="1">RuBisCO large subunit</shortName>
        <ecNumber evidence="1">4.1.1.39</ecNumber>
    </recommendedName>
</protein>
<comment type="function">
    <text evidence="1">RuBisCO catalyzes two reactions: the carboxylation of D-ribulose 1,5-bisphosphate, the primary event in carbon dioxide fixation, as well as the oxidative fragmentation of the pentose substrate in the photorespiration process. Both reactions occur simultaneously and in competition at the same active site.</text>
</comment>
<comment type="catalytic activity">
    <reaction evidence="1">
        <text>2 (2R)-3-phosphoglycerate + 2 H(+) = D-ribulose 1,5-bisphosphate + CO2 + H2O</text>
        <dbReference type="Rhea" id="RHEA:23124"/>
        <dbReference type="ChEBI" id="CHEBI:15377"/>
        <dbReference type="ChEBI" id="CHEBI:15378"/>
        <dbReference type="ChEBI" id="CHEBI:16526"/>
        <dbReference type="ChEBI" id="CHEBI:57870"/>
        <dbReference type="ChEBI" id="CHEBI:58272"/>
        <dbReference type="EC" id="4.1.1.39"/>
    </reaction>
</comment>
<comment type="catalytic activity">
    <reaction evidence="1">
        <text>D-ribulose 1,5-bisphosphate + O2 = 2-phosphoglycolate + (2R)-3-phosphoglycerate + 2 H(+)</text>
        <dbReference type="Rhea" id="RHEA:36631"/>
        <dbReference type="ChEBI" id="CHEBI:15378"/>
        <dbReference type="ChEBI" id="CHEBI:15379"/>
        <dbReference type="ChEBI" id="CHEBI:57870"/>
        <dbReference type="ChEBI" id="CHEBI:58033"/>
        <dbReference type="ChEBI" id="CHEBI:58272"/>
    </reaction>
</comment>
<comment type="cofactor">
    <cofactor evidence="1">
        <name>Mg(2+)</name>
        <dbReference type="ChEBI" id="CHEBI:18420"/>
    </cofactor>
    <text evidence="1">Binds 1 Mg(2+) ion per subunit.</text>
</comment>
<comment type="subunit">
    <text evidence="1">Heterohexadecamer of 8 large chains and 8 small chains; disulfide-linked. The disulfide link is formed within the large subunit homodimers.</text>
</comment>
<comment type="subcellular location">
    <subcellularLocation>
        <location>Plastid</location>
        <location>Chloroplast</location>
    </subcellularLocation>
</comment>
<comment type="PTM">
    <text evidence="1">The disulfide bond which can form in the large chain dimeric partners within the hexadecamer appears to be associated with oxidative stress and protein turnover.</text>
</comment>
<comment type="miscellaneous">
    <text evidence="1">The basic functional RuBisCO is composed of a large chain homodimer in a 'head-to-tail' conformation. In form I RuBisCO this homodimer is arranged in a barrel-like tetramer with the small subunits forming a tetrameric 'cap' on each end of the 'barrel'.</text>
</comment>
<comment type="similarity">
    <text evidence="1">Belongs to the RuBisCO large chain family. Type I subfamily.</text>
</comment>
<name>RBL_DIOEL</name>
<gene>
    <name evidence="1" type="primary">rbcL</name>
</gene>
<geneLocation type="chloroplast"/>
<keyword id="KW-0007">Acetylation</keyword>
<keyword id="KW-0113">Calvin cycle</keyword>
<keyword id="KW-0120">Carbon dioxide fixation</keyword>
<keyword id="KW-0150">Chloroplast</keyword>
<keyword id="KW-1015">Disulfide bond</keyword>
<keyword id="KW-0456">Lyase</keyword>
<keyword id="KW-0460">Magnesium</keyword>
<keyword id="KW-0479">Metal-binding</keyword>
<keyword id="KW-0488">Methylation</keyword>
<keyword id="KW-0503">Monooxygenase</keyword>
<keyword id="KW-0560">Oxidoreductase</keyword>
<keyword id="KW-0601">Photorespiration</keyword>
<keyword id="KW-0602">Photosynthesis</keyword>
<keyword id="KW-0934">Plastid</keyword>